<reference key="1">
    <citation type="journal article" date="2005" name="J. Biol. Chem.">
        <title>Hemextin AB complex, a unique anticoagulant protein complex from Hemachatus haemachatus (African Ringhals cobra) venom that inhibits clot initiation and factor VIIa activity.</title>
        <authorList>
            <person name="Banerjee Y."/>
            <person name="Mizuguchi J."/>
            <person name="Iwanaga S."/>
            <person name="Kini R.M."/>
        </authorList>
    </citation>
    <scope>PROTEIN SEQUENCE</scope>
    <scope>SUBCELLULAR LOCATION</scope>
    <scope>FUNCTION</scope>
    <scope>MASS SPECTROMETRY</scope>
    <scope>SUBUNIT</scope>
    <source>
        <tissue>Venom</tissue>
    </source>
</reference>
<reference key="2">
    <citation type="journal article" date="2006" name="J. Biol. Chem.">
        <authorList>
            <person name="Banerjee Y."/>
            <person name="Mizuguchi J."/>
            <person name="Iwanaga S."/>
            <person name="Kini R.M."/>
        </authorList>
    </citation>
    <scope>ERRATUM OF PUBMED:16204244</scope>
</reference>
<reference key="3">
    <citation type="journal article" date="2007" name="Biophys. J.">
        <title>Biophysical characterization of anticoagulant hemextin AB complex from the venom of snake Hemachatus haemachatus.</title>
        <authorList>
            <person name="Banerjee Y."/>
            <person name="Lakshminarayanan R."/>
            <person name="Vivekanandan S."/>
            <person name="Anand G.S."/>
            <person name="Valiyaveettil S."/>
            <person name="Kini R.M."/>
        </authorList>
    </citation>
    <scope>SUBUNIT</scope>
    <source>
        <tissue>Venom</tissue>
    </source>
</reference>
<name>3SBB_HEMHA</name>
<organism>
    <name type="scientific">Hemachatus haemachatus</name>
    <name type="common">Rinkhals</name>
    <name type="synonym">Sepedon haemachatus</name>
    <dbReference type="NCBI Taxonomy" id="8626"/>
    <lineage>
        <taxon>Eukaryota</taxon>
        <taxon>Metazoa</taxon>
        <taxon>Chordata</taxon>
        <taxon>Craniata</taxon>
        <taxon>Vertebrata</taxon>
        <taxon>Euteleostomi</taxon>
        <taxon>Lepidosauria</taxon>
        <taxon>Squamata</taxon>
        <taxon>Bifurcata</taxon>
        <taxon>Unidentata</taxon>
        <taxon>Episquamata</taxon>
        <taxon>Toxicofera</taxon>
        <taxon>Serpentes</taxon>
        <taxon>Colubroidea</taxon>
        <taxon>Elapidae</taxon>
        <taxon>Elapinae</taxon>
        <taxon>Hemachatus</taxon>
    </lineage>
</organism>
<protein>
    <recommendedName>
        <fullName evidence="3">Hemextin B</fullName>
    </recommendedName>
    <alternativeName>
        <fullName evidence="3">Hemachatus extrinsic tenase inhibitor B</fullName>
    </alternativeName>
</protein>
<feature type="chain" id="PRO_0000447302" description="Hemextin B" evidence="1">
    <location>
        <begin position="1"/>
        <end position="37" status="greater than"/>
    </location>
</feature>
<feature type="non-terminal residue">
    <location>
        <position position="37"/>
    </location>
</feature>
<accession>P0DQH4</accession>
<proteinExistence type="evidence at protein level"/>
<keyword id="KW-1203">Blood coagulation cascade inhibiting toxin</keyword>
<keyword id="KW-0903">Direct protein sequencing</keyword>
<keyword id="KW-1015">Disulfide bond</keyword>
<keyword id="KW-1199">Hemostasis impairing toxin</keyword>
<keyword id="KW-0964">Secreted</keyword>
<keyword id="KW-0800">Toxin</keyword>
<comment type="function">
    <text evidence="1">Hemextin B (monomer): does not show anticoagulant activity. Seems only to synergitically enhance hemextin A activity.</text>
</comment>
<comment type="function">
    <text evidence="1">Hemextin AB complex: specifically inhibits the activation of FX (F10) by the TF-FVIIa complex (extrinsic tenase complex (ETC)) (IC(50)= 100 nM, Ki=50 nM) by non-competitively inhibiting the enzymatic activity of FVIIa.</text>
</comment>
<comment type="subunit">
    <text evidence="1 2">Heterotetramer composed of 2 hemextin A and 2 hemextin B chains; non-covalently linked. Does not exist as a complex in the crude venom.</text>
</comment>
<comment type="subcellular location">
    <subcellularLocation>
        <location evidence="1">Secreted</location>
    </subcellularLocation>
</comment>
<comment type="tissue specificity">
    <text evidence="4">Expressed by the venom gland.</text>
</comment>
<comment type="PTM">
    <text evidence="4">May contain several disulfide bonds.</text>
</comment>
<comment type="mass spectrometry" mass="6792.56" method="Electrospray" evidence="1"/>
<comment type="similarity">
    <text evidence="4">Belongs to the three-finger toxin family. Short-chain subfamily. Type IB cytotoxin sub-subfamily.</text>
</comment>
<dbReference type="GO" id="GO:0005576">
    <property type="term" value="C:extracellular region"/>
    <property type="evidence" value="ECO:0007669"/>
    <property type="project" value="UniProtKB-SubCell"/>
</dbReference>
<dbReference type="GO" id="GO:0090729">
    <property type="term" value="F:toxin activity"/>
    <property type="evidence" value="ECO:0007669"/>
    <property type="project" value="UniProtKB-KW"/>
</dbReference>
<sequence length="37" mass="4323">LKCKNKVVPFLKCKNKVVPFLCYKMTLKKVTPKIKRG</sequence>
<evidence type="ECO:0000269" key="1">
    <source>
    </source>
</evidence>
<evidence type="ECO:0000269" key="2">
    <source>
    </source>
</evidence>
<evidence type="ECO:0000303" key="3">
    <source>
    </source>
</evidence>
<evidence type="ECO:0000305" key="4"/>